<keyword id="KW-0997">Cell inner membrane</keyword>
<keyword id="KW-1003">Cell membrane</keyword>
<keyword id="KW-0903">Direct protein sequencing</keyword>
<keyword id="KW-0285">Flavoprotein</keyword>
<keyword id="KW-0288">FMN</keyword>
<keyword id="KW-0406">Ion transport</keyword>
<keyword id="KW-0472">Membrane</keyword>
<keyword id="KW-0520">NAD</keyword>
<keyword id="KW-0597">Phosphoprotein</keyword>
<keyword id="KW-0915">Sodium</keyword>
<keyword id="KW-0739">Sodium transport</keyword>
<keyword id="KW-1278">Translocase</keyword>
<keyword id="KW-0812">Transmembrane</keyword>
<keyword id="KW-1133">Transmembrane helix</keyword>
<keyword id="KW-0813">Transport</keyword>
<keyword id="KW-0830">Ubiquinone</keyword>
<reference key="1">
    <citation type="journal article" date="1999" name="Biochemistry">
        <title>Sequencing and preliminary characterization of the Na+-translocating NADH:ubiquinone oxidoreductase from Vibrio harveyi.</title>
        <authorList>
            <person name="Zhou W."/>
            <person name="Bertsova Y.V."/>
            <person name="Feng B."/>
            <person name="Tsatsos P."/>
            <person name="Verkhovskaya M.L."/>
            <person name="Gennis R.B."/>
            <person name="Bogachev A.V."/>
            <person name="Barquera B."/>
        </authorList>
    </citation>
    <scope>NUCLEOTIDE SEQUENCE [GENOMIC DNA]</scope>
    <scope>PROTEIN SEQUENCE OF 2-11 AND 213-222</scope>
    <scope>MASS SPECTROMETRY</scope>
</reference>
<reference key="2">
    <citation type="submission" date="2007-08" db="EMBL/GenBank/DDBJ databases">
        <authorList>
            <consortium name="The Vibrio harveyi Genome Sequencing Project"/>
            <person name="Bassler B."/>
            <person name="Clifton S.W."/>
            <person name="Fulton L."/>
            <person name="Delehaunty K."/>
            <person name="Fronick C."/>
            <person name="Harrison M."/>
            <person name="Markivic C."/>
            <person name="Fulton R."/>
            <person name="Tin-Wollam A.-M."/>
            <person name="Shah N."/>
            <person name="Pepin K."/>
            <person name="Nash W."/>
            <person name="Thiruvilangam P."/>
            <person name="Bhonagiri V."/>
            <person name="Waters C."/>
            <person name="Tu K.C."/>
            <person name="Irgon J."/>
            <person name="Wilson R.K."/>
        </authorList>
    </citation>
    <scope>NUCLEOTIDE SEQUENCE [LARGE SCALE GENOMIC DNA]</scope>
    <source>
        <strain>ATCC BAA-1116 / BB120</strain>
    </source>
</reference>
<gene>
    <name evidence="1" type="primary">nqrC</name>
    <name type="ordered locus">VIBHAR_03273</name>
</gene>
<name>NQRC_VIBC1</name>
<protein>
    <recommendedName>
        <fullName evidence="1">Na(+)-translocating NADH-quinone reductase subunit C</fullName>
        <shortName evidence="1">Na(+)-NQR subunit C</shortName>
        <shortName evidence="1">Na(+)-translocating NQR subunit C</shortName>
        <ecNumber evidence="1">7.2.1.1</ecNumber>
    </recommendedName>
    <alternativeName>
        <fullName evidence="1">NQR complex subunit C</fullName>
    </alternativeName>
    <alternativeName>
        <fullName evidence="1">NQR-1 subunit C</fullName>
    </alternativeName>
</protein>
<organism>
    <name type="scientific">Vibrio campbellii (strain ATCC BAA-1116)</name>
    <dbReference type="NCBI Taxonomy" id="2902295"/>
    <lineage>
        <taxon>Bacteria</taxon>
        <taxon>Pseudomonadati</taxon>
        <taxon>Pseudomonadota</taxon>
        <taxon>Gammaproteobacteria</taxon>
        <taxon>Vibrionales</taxon>
        <taxon>Vibrionaceae</taxon>
        <taxon>Vibrio</taxon>
    </lineage>
</organism>
<feature type="initiator methionine" description="Removed" evidence="2">
    <location>
        <position position="1"/>
    </location>
</feature>
<feature type="chain" id="PRO_0000214224" description="Na(+)-translocating NADH-quinone reductase subunit C">
    <location>
        <begin position="2"/>
        <end position="261"/>
    </location>
</feature>
<feature type="transmembrane region" description="Helical" evidence="1">
    <location>
        <begin position="12"/>
        <end position="32"/>
    </location>
</feature>
<feature type="modified residue" description="FMN phosphoryl threonine" evidence="1">
    <location>
        <position position="229"/>
    </location>
</feature>
<feature type="sequence conflict" description="In Ref. 1; AAF15413." evidence="3" ref="1">
    <original>V</original>
    <variation>I</variation>
    <location>
        <position position="16"/>
    </location>
</feature>
<comment type="function">
    <text evidence="1">NQR complex catalyzes the reduction of ubiquinone-1 to ubiquinol by two successive reactions, coupled with the transport of Na(+) ions from the cytoplasm to the periplasm. NqrA to NqrE are probably involved in the second step, the conversion of ubisemiquinone to ubiquinol.</text>
</comment>
<comment type="catalytic activity">
    <reaction evidence="1">
        <text>a ubiquinone + n Na(+)(in) + NADH + H(+) = a ubiquinol + n Na(+)(out) + NAD(+)</text>
        <dbReference type="Rhea" id="RHEA:47748"/>
        <dbReference type="Rhea" id="RHEA-COMP:9565"/>
        <dbReference type="Rhea" id="RHEA-COMP:9566"/>
        <dbReference type="ChEBI" id="CHEBI:15378"/>
        <dbReference type="ChEBI" id="CHEBI:16389"/>
        <dbReference type="ChEBI" id="CHEBI:17976"/>
        <dbReference type="ChEBI" id="CHEBI:29101"/>
        <dbReference type="ChEBI" id="CHEBI:57540"/>
        <dbReference type="ChEBI" id="CHEBI:57945"/>
        <dbReference type="EC" id="7.2.1.1"/>
    </reaction>
</comment>
<comment type="cofactor">
    <cofactor evidence="1">
        <name>FMN</name>
        <dbReference type="ChEBI" id="CHEBI:58210"/>
    </cofactor>
</comment>
<comment type="subunit">
    <text evidence="1">Composed of six subunits; NqrA, NqrB, NqrC, NqrD, NqrE and NqrF.</text>
</comment>
<comment type="subcellular location">
    <subcellularLocation>
        <location evidence="1">Cell inner membrane</location>
        <topology evidence="1">Single-pass membrane protein</topology>
    </subcellularLocation>
</comment>
<comment type="mass spectrometry" mass="28120.0" method="MALDI" evidence="2"/>
<comment type="similarity">
    <text evidence="1">Belongs to the NqrC family.</text>
</comment>
<sequence length="261" mass="27791">MASNNDSIKKTLGVVVGLSLVCSIIVSTAAVGLRDQQKANAVLDKQSKIVEVAGIDAEGKKVPELFAEYIEPRLVDFKTGDFVEKAEDGSTAANYDQRKAAKDPAESIKLTADEDKAKILRRANTGIVYLVKNGDDISKVIIPVHGNGLWSMMYAFVAVETDGNTVSGITYYEQGETPGLGGEVENPVWRAQFVGKKLFDENHKPAIKIVKGGAPEGSEHGVDGLSGATLTGNGVQGTFDFWLGDMGFGPFLAKVRDGGLN</sequence>
<evidence type="ECO:0000255" key="1">
    <source>
        <dbReference type="HAMAP-Rule" id="MF_00427"/>
    </source>
</evidence>
<evidence type="ECO:0000269" key="2">
    <source>
    </source>
</evidence>
<evidence type="ECO:0000305" key="3"/>
<proteinExistence type="evidence at protein level"/>
<accession>Q9RFV9</accession>
<accession>A7N1U4</accession>
<dbReference type="EC" id="7.2.1.1" evidence="1"/>
<dbReference type="EMBL" id="AF165980">
    <property type="protein sequence ID" value="AAF15413.1"/>
    <property type="molecule type" value="Genomic_DNA"/>
</dbReference>
<dbReference type="EMBL" id="CP000789">
    <property type="protein sequence ID" value="ABU72221.1"/>
    <property type="molecule type" value="Genomic_DNA"/>
</dbReference>
<dbReference type="RefSeq" id="WP_012128721.1">
    <property type="nucleotide sequence ID" value="NC_022269.1"/>
</dbReference>
<dbReference type="SMR" id="Q9RFV9"/>
<dbReference type="KEGG" id="vha:VIBHAR_03273"/>
<dbReference type="PATRIC" id="fig|338187.25.peg.2919"/>
<dbReference type="Proteomes" id="UP000008152">
    <property type="component" value="Chromosome I"/>
</dbReference>
<dbReference type="GO" id="GO:0005886">
    <property type="term" value="C:plasma membrane"/>
    <property type="evidence" value="ECO:0007669"/>
    <property type="project" value="UniProtKB-SubCell"/>
</dbReference>
<dbReference type="GO" id="GO:0010181">
    <property type="term" value="F:FMN binding"/>
    <property type="evidence" value="ECO:0007669"/>
    <property type="project" value="UniProtKB-UniRule"/>
</dbReference>
<dbReference type="GO" id="GO:0016655">
    <property type="term" value="F:oxidoreductase activity, acting on NAD(P)H, quinone or similar compound as acceptor"/>
    <property type="evidence" value="ECO:0007669"/>
    <property type="project" value="UniProtKB-UniRule"/>
</dbReference>
<dbReference type="GO" id="GO:0006814">
    <property type="term" value="P:sodium ion transport"/>
    <property type="evidence" value="ECO:0007669"/>
    <property type="project" value="UniProtKB-UniRule"/>
</dbReference>
<dbReference type="HAMAP" id="MF_00427">
    <property type="entry name" value="NqrC"/>
    <property type="match status" value="1"/>
</dbReference>
<dbReference type="InterPro" id="IPR007329">
    <property type="entry name" value="FMN-bd"/>
</dbReference>
<dbReference type="InterPro" id="IPR010204">
    <property type="entry name" value="NqrC"/>
</dbReference>
<dbReference type="NCBIfam" id="TIGR01938">
    <property type="entry name" value="nqrC"/>
    <property type="match status" value="1"/>
</dbReference>
<dbReference type="NCBIfam" id="NF003746">
    <property type="entry name" value="PRK05346.1-1"/>
    <property type="match status" value="1"/>
</dbReference>
<dbReference type="NCBIfam" id="NF003749">
    <property type="entry name" value="PRK05346.1-5"/>
    <property type="match status" value="1"/>
</dbReference>
<dbReference type="PANTHER" id="PTHR37838">
    <property type="entry name" value="NA(+)-TRANSLOCATING NADH-QUINONE REDUCTASE SUBUNIT C"/>
    <property type="match status" value="1"/>
</dbReference>
<dbReference type="PANTHER" id="PTHR37838:SF1">
    <property type="entry name" value="NA(+)-TRANSLOCATING NADH-QUINONE REDUCTASE SUBUNIT C"/>
    <property type="match status" value="1"/>
</dbReference>
<dbReference type="Pfam" id="PF04205">
    <property type="entry name" value="FMN_bind"/>
    <property type="match status" value="1"/>
</dbReference>
<dbReference type="PIRSF" id="PIRSF009437">
    <property type="entry name" value="NQR-1_subunit_C"/>
    <property type="match status" value="1"/>
</dbReference>
<dbReference type="SMART" id="SM00900">
    <property type="entry name" value="FMN_bind"/>
    <property type="match status" value="1"/>
</dbReference>